<comment type="function">
    <text evidence="1">Murein-degrading enzyme that degrades murein glycan strands and insoluble, high-molecular weight murein sacculi, with the concomitant formation of a 1,6-anhydromuramoyl product. Lytic transglycosylases (LTs) play an integral role in the metabolism of the peptidoglycan (PG) sacculus. Their lytic action creates space within the PG sacculus to allow for its expansion as well as for the insertion of various structures such as secretion systems and flagella.</text>
</comment>
<comment type="catalytic activity">
    <reaction evidence="1">
        <text>Exolytic cleavage of the (1-&gt;4)-beta-glycosidic linkage between N-acetylmuramic acid (MurNAc) and N-acetylglucosamine (GlcNAc) residues in peptidoglycan, from either the reducing or the non-reducing ends of the peptidoglycan chains, with concomitant formation of a 1,6-anhydrobond in the MurNAc residue.</text>
        <dbReference type="EC" id="4.2.2.n1"/>
    </reaction>
</comment>
<comment type="subcellular location">
    <subcellularLocation>
        <location>Cell outer membrane</location>
        <topology>Peripheral membrane protein</topology>
    </subcellularLocation>
    <text evidence="1">Attached to the inner leaflet of the outer membrane.</text>
</comment>
<comment type="domain">
    <text evidence="1">The N-terminal domain does not have lytic activity and probably modulates enzymatic activity. The C-terminal domain is the catalytic active domain.</text>
</comment>
<comment type="similarity">
    <text evidence="1">In the N-terminal section; belongs to the bacterial solute-binding protein 3 family.</text>
</comment>
<comment type="similarity">
    <text evidence="1">In the C-terminal section; belongs to the transglycosylase Slt family.</text>
</comment>
<keyword id="KW-0998">Cell outer membrane</keyword>
<keyword id="KW-0961">Cell wall biogenesis/degradation</keyword>
<keyword id="KW-0456">Lyase</keyword>
<keyword id="KW-0472">Membrane</keyword>
<keyword id="KW-1185">Reference proteome</keyword>
<keyword id="KW-0732">Signal</keyword>
<organism>
    <name type="scientific">Pectobacterium atrosepticum (strain SCRI 1043 / ATCC BAA-672)</name>
    <name type="common">Erwinia carotovora subsp. atroseptica</name>
    <dbReference type="NCBI Taxonomy" id="218491"/>
    <lineage>
        <taxon>Bacteria</taxon>
        <taxon>Pseudomonadati</taxon>
        <taxon>Pseudomonadota</taxon>
        <taxon>Gammaproteobacteria</taxon>
        <taxon>Enterobacterales</taxon>
        <taxon>Pectobacteriaceae</taxon>
        <taxon>Pectobacterium</taxon>
    </lineage>
</organism>
<accession>Q6D237</accession>
<evidence type="ECO:0000255" key="1">
    <source>
        <dbReference type="HAMAP-Rule" id="MF_02016"/>
    </source>
</evidence>
<protein>
    <recommendedName>
        <fullName evidence="1">Membrane-bound lytic murein transglycosylase F</fullName>
        <ecNumber evidence="1">4.2.2.n1</ecNumber>
    </recommendedName>
    <alternativeName>
        <fullName evidence="1">Murein lyase F</fullName>
    </alternativeName>
</protein>
<proteinExistence type="inferred from homology"/>
<sequence length="481" mass="54689">MKPLKLNYFFIGIITLLLALALWPSIPWRSSQDVQLRQILSRGELRISTVNSPLTYAMSNGSPTGLDYELAKRFADYLGVKLVVSSRKNLDELFDDLDGDDADLLAAGLIYNHERLERFRAGPTYYSISQQMVYRLGSPRPKTLDKLQGRLVVTSGSAHAATLRDLKAEKYPQLSWESASDQSTQELLKQVADGKLDYTLGDSVTIGLMQRIHPQLAVAFDLSDEEPVIWYMRRSHDDSLSAALLDFFSQLVEDGTLARLEEKYLGHVGEFDYVDTTTFLSAIDETLPDLRPLFEKYATDIDWKLLAAISYQESHWNPLATSPTGVRGLMMLTRNTAESLNVTDRVDPEQSIRGGAQYMSHMMQKMPDTIPEDEKIWFALASYNMGYAHLLDARKLTEKQKGNPDSWVDVKMRLPMLSQKRYYTQTTYGYARGHEAYNYVENIRRYMVSLEGYLIEKEAKVQQQTQIALGYPAVPLTKVPE</sequence>
<gene>
    <name evidence="1" type="primary">mltF</name>
    <name type="ordered locus">ECA3259</name>
</gene>
<dbReference type="EC" id="4.2.2.n1" evidence="1"/>
<dbReference type="EMBL" id="BX950851">
    <property type="protein sequence ID" value="CAG76157.1"/>
    <property type="molecule type" value="Genomic_DNA"/>
</dbReference>
<dbReference type="SMR" id="Q6D237"/>
<dbReference type="STRING" id="218491.ECA3259"/>
<dbReference type="CAZy" id="GH23">
    <property type="family name" value="Glycoside Hydrolase Family 23"/>
</dbReference>
<dbReference type="KEGG" id="eca:ECA3259"/>
<dbReference type="eggNOG" id="COG4623">
    <property type="taxonomic scope" value="Bacteria"/>
</dbReference>
<dbReference type="HOGENOM" id="CLU_027494_0_1_6"/>
<dbReference type="Proteomes" id="UP000007966">
    <property type="component" value="Chromosome"/>
</dbReference>
<dbReference type="GO" id="GO:0009279">
    <property type="term" value="C:cell outer membrane"/>
    <property type="evidence" value="ECO:0007669"/>
    <property type="project" value="UniProtKB-SubCell"/>
</dbReference>
<dbReference type="GO" id="GO:0008933">
    <property type="term" value="F:peptidoglycan lytic transglycosylase activity"/>
    <property type="evidence" value="ECO:0007669"/>
    <property type="project" value="UniProtKB-UniRule"/>
</dbReference>
<dbReference type="GO" id="GO:0016998">
    <property type="term" value="P:cell wall macromolecule catabolic process"/>
    <property type="evidence" value="ECO:0007669"/>
    <property type="project" value="UniProtKB-UniRule"/>
</dbReference>
<dbReference type="GO" id="GO:0071555">
    <property type="term" value="P:cell wall organization"/>
    <property type="evidence" value="ECO:0007669"/>
    <property type="project" value="UniProtKB-KW"/>
</dbReference>
<dbReference type="GO" id="GO:0009253">
    <property type="term" value="P:peptidoglycan catabolic process"/>
    <property type="evidence" value="ECO:0007669"/>
    <property type="project" value="TreeGrafter"/>
</dbReference>
<dbReference type="CDD" id="cd13403">
    <property type="entry name" value="MLTF-like"/>
    <property type="match status" value="1"/>
</dbReference>
<dbReference type="CDD" id="cd01009">
    <property type="entry name" value="PBP2_YfhD_N"/>
    <property type="match status" value="1"/>
</dbReference>
<dbReference type="FunFam" id="1.10.530.10:FF:000003">
    <property type="entry name" value="Membrane-bound lytic murein transglycosylase F"/>
    <property type="match status" value="1"/>
</dbReference>
<dbReference type="Gene3D" id="1.10.530.10">
    <property type="match status" value="1"/>
</dbReference>
<dbReference type="Gene3D" id="3.40.190.10">
    <property type="entry name" value="Periplasmic binding protein-like II"/>
    <property type="match status" value="2"/>
</dbReference>
<dbReference type="HAMAP" id="MF_02016">
    <property type="entry name" value="MltF"/>
    <property type="match status" value="1"/>
</dbReference>
<dbReference type="InterPro" id="IPR023346">
    <property type="entry name" value="Lysozyme-like_dom_sf"/>
</dbReference>
<dbReference type="InterPro" id="IPR023703">
    <property type="entry name" value="MltF"/>
</dbReference>
<dbReference type="InterPro" id="IPR001638">
    <property type="entry name" value="Solute-binding_3/MltF_N"/>
</dbReference>
<dbReference type="InterPro" id="IPR000189">
    <property type="entry name" value="Transglyc_AS"/>
</dbReference>
<dbReference type="InterPro" id="IPR008258">
    <property type="entry name" value="Transglycosylase_SLT_dom_1"/>
</dbReference>
<dbReference type="NCBIfam" id="NF008112">
    <property type="entry name" value="PRK10859.1"/>
    <property type="match status" value="1"/>
</dbReference>
<dbReference type="PANTHER" id="PTHR35936">
    <property type="entry name" value="MEMBRANE-BOUND LYTIC MUREIN TRANSGLYCOSYLASE F"/>
    <property type="match status" value="1"/>
</dbReference>
<dbReference type="PANTHER" id="PTHR35936:SF32">
    <property type="entry name" value="MEMBRANE-BOUND LYTIC MUREIN TRANSGLYCOSYLASE F"/>
    <property type="match status" value="1"/>
</dbReference>
<dbReference type="Pfam" id="PF00497">
    <property type="entry name" value="SBP_bac_3"/>
    <property type="match status" value="1"/>
</dbReference>
<dbReference type="Pfam" id="PF01464">
    <property type="entry name" value="SLT"/>
    <property type="match status" value="1"/>
</dbReference>
<dbReference type="SMART" id="SM00062">
    <property type="entry name" value="PBPb"/>
    <property type="match status" value="1"/>
</dbReference>
<dbReference type="SUPFAM" id="SSF53955">
    <property type="entry name" value="Lysozyme-like"/>
    <property type="match status" value="1"/>
</dbReference>
<dbReference type="SUPFAM" id="SSF53850">
    <property type="entry name" value="Periplasmic binding protein-like II"/>
    <property type="match status" value="1"/>
</dbReference>
<dbReference type="PROSITE" id="PS00922">
    <property type="entry name" value="TRANSGLYCOSYLASE"/>
    <property type="match status" value="1"/>
</dbReference>
<name>MLTF_PECAS</name>
<feature type="signal peptide" evidence="1">
    <location>
        <begin position="1"/>
        <end position="21"/>
    </location>
</feature>
<feature type="chain" id="PRO_0000353937" description="Membrane-bound lytic murein transglycosylase F">
    <location>
        <begin position="22"/>
        <end position="481"/>
    </location>
</feature>
<feature type="region of interest" description="Non-LT domain" evidence="1">
    <location>
        <begin position="22"/>
        <end position="268"/>
    </location>
</feature>
<feature type="region of interest" description="LT domain" evidence="1">
    <location>
        <begin position="269"/>
        <end position="481"/>
    </location>
</feature>
<feature type="active site" evidence="1">
    <location>
        <position position="313"/>
    </location>
</feature>
<reference key="1">
    <citation type="journal article" date="2004" name="Proc. Natl. Acad. Sci. U.S.A.">
        <title>Genome sequence of the enterobacterial phytopathogen Erwinia carotovora subsp. atroseptica and characterization of virulence factors.</title>
        <authorList>
            <person name="Bell K.S."/>
            <person name="Sebaihia M."/>
            <person name="Pritchard L."/>
            <person name="Holden M.T.G."/>
            <person name="Hyman L.J."/>
            <person name="Holeva M.C."/>
            <person name="Thomson N.R."/>
            <person name="Bentley S.D."/>
            <person name="Churcher L.J.C."/>
            <person name="Mungall K."/>
            <person name="Atkin R."/>
            <person name="Bason N."/>
            <person name="Brooks K."/>
            <person name="Chillingworth T."/>
            <person name="Clark K."/>
            <person name="Doggett J."/>
            <person name="Fraser A."/>
            <person name="Hance Z."/>
            <person name="Hauser H."/>
            <person name="Jagels K."/>
            <person name="Moule S."/>
            <person name="Norbertczak H."/>
            <person name="Ormond D."/>
            <person name="Price C."/>
            <person name="Quail M.A."/>
            <person name="Sanders M."/>
            <person name="Walker D."/>
            <person name="Whitehead S."/>
            <person name="Salmond G.P.C."/>
            <person name="Birch P.R.J."/>
            <person name="Parkhill J."/>
            <person name="Toth I.K."/>
        </authorList>
    </citation>
    <scope>NUCLEOTIDE SEQUENCE [LARGE SCALE GENOMIC DNA]</scope>
    <source>
        <strain>SCRI 1043 / ATCC BAA-672</strain>
    </source>
</reference>